<sequence length="371" mass="41786">MVMDKVPMPSRAKAKAQRKKLHINHSFSLNNLFSDPFALSSISITLLSWCIAIAGCIATASDTDNFPRFTWWGIAYQFLILFMVIIFYCYDMVDYYKNFIAGATAVSFVYNTNSATILVYGDGSRKAAASAGVILLSIVNLIWIFYYGSDNASPTSRWIDSFSLRGIRPSATQDASMRARRRNRNNLRSQRFTGDNFYPEHQPQNYMSSMALTGFENPDPAYYTGPNVPLDRNGSVAYSDNNMPGAFTQDMNANNQNNLNPNNFNQNNSNQNTFNQNTFMTETSNGNTDTTMGGTLELYSDAGEESFPYTAQTLYRYQADEDDAYEISFEQGEILKVSDIEGRWWKAKRSTGETGIIPSNYVKLIEDNIAM</sequence>
<accession>C5DQY5</accession>
<evidence type="ECO:0000250" key="1"/>
<evidence type="ECO:0000255" key="2"/>
<evidence type="ECO:0000255" key="3">
    <source>
        <dbReference type="PROSITE-ProRule" id="PRU00192"/>
    </source>
</evidence>
<evidence type="ECO:0000256" key="4">
    <source>
        <dbReference type="SAM" id="MobiDB-lite"/>
    </source>
</evidence>
<evidence type="ECO:0000305" key="5"/>
<gene>
    <name type="primary">SHO1</name>
    <name type="ordered locus">ZYRO0B04004g</name>
</gene>
<keyword id="KW-1003">Cell membrane</keyword>
<keyword id="KW-0472">Membrane</keyword>
<keyword id="KW-1185">Reference proteome</keyword>
<keyword id="KW-0728">SH3 domain</keyword>
<keyword id="KW-0346">Stress response</keyword>
<keyword id="KW-0812">Transmembrane</keyword>
<keyword id="KW-1133">Transmembrane helix</keyword>
<organism>
    <name type="scientific">Zygosaccharomyces rouxii (strain ATCC 2623 / CBS 732 / NBRC 1130 / NCYC 568 / NRRL Y-229)</name>
    <dbReference type="NCBI Taxonomy" id="559307"/>
    <lineage>
        <taxon>Eukaryota</taxon>
        <taxon>Fungi</taxon>
        <taxon>Dikarya</taxon>
        <taxon>Ascomycota</taxon>
        <taxon>Saccharomycotina</taxon>
        <taxon>Saccharomycetes</taxon>
        <taxon>Saccharomycetales</taxon>
        <taxon>Saccharomycetaceae</taxon>
        <taxon>Zygosaccharomyces</taxon>
    </lineage>
</organism>
<reference key="1">
    <citation type="journal article" date="2009" name="Genome Res.">
        <title>Comparative genomics of protoploid Saccharomycetaceae.</title>
        <authorList>
            <consortium name="The Genolevures Consortium"/>
            <person name="Souciet J.-L."/>
            <person name="Dujon B."/>
            <person name="Gaillardin C."/>
            <person name="Johnston M."/>
            <person name="Baret P.V."/>
            <person name="Cliften P."/>
            <person name="Sherman D.J."/>
            <person name="Weissenbach J."/>
            <person name="Westhof E."/>
            <person name="Wincker P."/>
            <person name="Jubin C."/>
            <person name="Poulain J."/>
            <person name="Barbe V."/>
            <person name="Segurens B."/>
            <person name="Artiguenave F."/>
            <person name="Anthouard V."/>
            <person name="Vacherie B."/>
            <person name="Val M.-E."/>
            <person name="Fulton R.S."/>
            <person name="Minx P."/>
            <person name="Wilson R."/>
            <person name="Durrens P."/>
            <person name="Jean G."/>
            <person name="Marck C."/>
            <person name="Martin T."/>
            <person name="Nikolski M."/>
            <person name="Rolland T."/>
            <person name="Seret M.-L."/>
            <person name="Casaregola S."/>
            <person name="Despons L."/>
            <person name="Fairhead C."/>
            <person name="Fischer G."/>
            <person name="Lafontaine I."/>
            <person name="Leh V."/>
            <person name="Lemaire M."/>
            <person name="de Montigny J."/>
            <person name="Neuveglise C."/>
            <person name="Thierry A."/>
            <person name="Blanc-Lenfle I."/>
            <person name="Bleykasten C."/>
            <person name="Diffels J."/>
            <person name="Fritsch E."/>
            <person name="Frangeul L."/>
            <person name="Goeffon A."/>
            <person name="Jauniaux N."/>
            <person name="Kachouri-Lafond R."/>
            <person name="Payen C."/>
            <person name="Potier S."/>
            <person name="Pribylova L."/>
            <person name="Ozanne C."/>
            <person name="Richard G.-F."/>
            <person name="Sacerdot C."/>
            <person name="Straub M.-L."/>
            <person name="Talla E."/>
        </authorList>
    </citation>
    <scope>NUCLEOTIDE SEQUENCE [LARGE SCALE GENOMIC DNA]</scope>
    <source>
        <strain>ATCC 2623 / CBS 732 / BCRC 21506 / NBRC 1130 / NCYC 568 / NRRL Y-229</strain>
    </source>
</reference>
<dbReference type="EMBL" id="CU928174">
    <property type="protein sequence ID" value="CAR26196.1"/>
    <property type="molecule type" value="Genomic_DNA"/>
</dbReference>
<dbReference type="RefSeq" id="XP_002495129.1">
    <property type="nucleotide sequence ID" value="XM_002495084.1"/>
</dbReference>
<dbReference type="SMR" id="C5DQY5"/>
<dbReference type="FunCoup" id="C5DQY5">
    <property type="interactions" value="229"/>
</dbReference>
<dbReference type="STRING" id="559307.C5DQY5"/>
<dbReference type="GeneID" id="8202270"/>
<dbReference type="KEGG" id="zro:ZYRO0B04004g"/>
<dbReference type="HOGENOM" id="CLU_043316_0_0_1"/>
<dbReference type="InParanoid" id="C5DQY5"/>
<dbReference type="Proteomes" id="UP000008536">
    <property type="component" value="Chromosome B"/>
</dbReference>
<dbReference type="GO" id="GO:0005886">
    <property type="term" value="C:plasma membrane"/>
    <property type="evidence" value="ECO:0007669"/>
    <property type="project" value="UniProtKB-SubCell"/>
</dbReference>
<dbReference type="CDD" id="cd11855">
    <property type="entry name" value="SH3_Sho1p"/>
    <property type="match status" value="1"/>
</dbReference>
<dbReference type="FunFam" id="2.30.30.40:FF:000213">
    <property type="entry name" value="High osmolarity signaling protein SHO1"/>
    <property type="match status" value="1"/>
</dbReference>
<dbReference type="Gene3D" id="2.30.30.40">
    <property type="entry name" value="SH3 Domains"/>
    <property type="match status" value="1"/>
</dbReference>
<dbReference type="InterPro" id="IPR036028">
    <property type="entry name" value="SH3-like_dom_sf"/>
</dbReference>
<dbReference type="InterPro" id="IPR001452">
    <property type="entry name" value="SH3_domain"/>
</dbReference>
<dbReference type="InterPro" id="IPR035522">
    <property type="entry name" value="Sho1_SH3"/>
</dbReference>
<dbReference type="Pfam" id="PF00018">
    <property type="entry name" value="SH3_1"/>
    <property type="match status" value="1"/>
</dbReference>
<dbReference type="PRINTS" id="PR00452">
    <property type="entry name" value="SH3DOMAIN"/>
</dbReference>
<dbReference type="SMART" id="SM00326">
    <property type="entry name" value="SH3"/>
    <property type="match status" value="1"/>
</dbReference>
<dbReference type="SUPFAM" id="SSF50044">
    <property type="entry name" value="SH3-domain"/>
    <property type="match status" value="1"/>
</dbReference>
<dbReference type="PROSITE" id="PS50002">
    <property type="entry name" value="SH3"/>
    <property type="match status" value="1"/>
</dbReference>
<feature type="chain" id="PRO_0000410417" description="High osmolarity signaling protein SHO1">
    <location>
        <begin position="1"/>
        <end position="371"/>
    </location>
</feature>
<feature type="topological domain" description="Cytoplasmic" evidence="2">
    <location>
        <begin position="1"/>
        <end position="36"/>
    </location>
</feature>
<feature type="transmembrane region" description="Helical" evidence="2">
    <location>
        <begin position="37"/>
        <end position="57"/>
    </location>
</feature>
<feature type="topological domain" description="Extracellular" evidence="2">
    <location>
        <begin position="58"/>
        <end position="68"/>
    </location>
</feature>
<feature type="transmembrane region" description="Helical" evidence="2">
    <location>
        <begin position="69"/>
        <end position="89"/>
    </location>
</feature>
<feature type="topological domain" description="Cytoplasmic" evidence="2">
    <location>
        <begin position="90"/>
        <end position="98"/>
    </location>
</feature>
<feature type="transmembrane region" description="Helical" evidence="2">
    <location>
        <begin position="99"/>
        <end position="119"/>
    </location>
</feature>
<feature type="topological domain" description="Extracellular" evidence="2">
    <location>
        <begin position="120"/>
        <end position="126"/>
    </location>
</feature>
<feature type="transmembrane region" description="Helical" evidence="2">
    <location>
        <begin position="127"/>
        <end position="147"/>
    </location>
</feature>
<feature type="topological domain" description="Cytoplasmic" evidence="2">
    <location>
        <begin position="148"/>
        <end position="371"/>
    </location>
</feature>
<feature type="domain" description="SH3" evidence="3">
    <location>
        <begin position="306"/>
        <end position="367"/>
    </location>
</feature>
<feature type="region of interest" description="Disordered" evidence="4">
    <location>
        <begin position="173"/>
        <end position="200"/>
    </location>
</feature>
<proteinExistence type="inferred from homology"/>
<protein>
    <recommendedName>
        <fullName>High osmolarity signaling protein SHO1</fullName>
    </recommendedName>
    <alternativeName>
        <fullName>Osmosensor SHO1</fullName>
    </alternativeName>
</protein>
<name>SHO1_ZYGRC</name>
<comment type="function">
    <text evidence="1">Plasma membrane osmosensor that activates the high osmolarity glycerol (HOG) MAPK signaling pathway in response to high osmolarity.</text>
</comment>
<comment type="subunit">
    <text evidence="1">Forms homooligomers.</text>
</comment>
<comment type="subcellular location">
    <subcellularLocation>
        <location evidence="1">Cell membrane</location>
        <topology evidence="1">Multi-pass membrane protein</topology>
    </subcellularLocation>
</comment>
<comment type="similarity">
    <text evidence="5">Belongs to the SHO1 family.</text>
</comment>